<accession>Q8KE84</accession>
<gene>
    <name evidence="1" type="primary">recR</name>
    <name type="ordered locus">CT0806</name>
</gene>
<comment type="function">
    <text evidence="1">May play a role in DNA repair. It seems to be involved in an RecBC-independent recombinational process of DNA repair. It may act with RecF and RecO.</text>
</comment>
<comment type="similarity">
    <text evidence="1">Belongs to the RecR family.</text>
</comment>
<dbReference type="EMBL" id="AE006470">
    <property type="protein sequence ID" value="AAM72042.1"/>
    <property type="molecule type" value="Genomic_DNA"/>
</dbReference>
<dbReference type="RefSeq" id="NP_661700.1">
    <property type="nucleotide sequence ID" value="NC_002932.3"/>
</dbReference>
<dbReference type="RefSeq" id="WP_010932487.1">
    <property type="nucleotide sequence ID" value="NC_002932.3"/>
</dbReference>
<dbReference type="SMR" id="Q8KE84"/>
<dbReference type="STRING" id="194439.CT0806"/>
<dbReference type="EnsemblBacteria" id="AAM72042">
    <property type="protein sequence ID" value="AAM72042"/>
    <property type="gene ID" value="CT0806"/>
</dbReference>
<dbReference type="KEGG" id="cte:CT0806"/>
<dbReference type="PATRIC" id="fig|194439.7.peg.731"/>
<dbReference type="eggNOG" id="COG0353">
    <property type="taxonomic scope" value="Bacteria"/>
</dbReference>
<dbReference type="HOGENOM" id="CLU_060739_1_0_10"/>
<dbReference type="OrthoDB" id="9802672at2"/>
<dbReference type="Proteomes" id="UP000001007">
    <property type="component" value="Chromosome"/>
</dbReference>
<dbReference type="GO" id="GO:0003677">
    <property type="term" value="F:DNA binding"/>
    <property type="evidence" value="ECO:0007669"/>
    <property type="project" value="UniProtKB-UniRule"/>
</dbReference>
<dbReference type="GO" id="GO:0008270">
    <property type="term" value="F:zinc ion binding"/>
    <property type="evidence" value="ECO:0007669"/>
    <property type="project" value="UniProtKB-KW"/>
</dbReference>
<dbReference type="GO" id="GO:0006310">
    <property type="term" value="P:DNA recombination"/>
    <property type="evidence" value="ECO:0007669"/>
    <property type="project" value="UniProtKB-UniRule"/>
</dbReference>
<dbReference type="GO" id="GO:0006281">
    <property type="term" value="P:DNA repair"/>
    <property type="evidence" value="ECO:0007669"/>
    <property type="project" value="UniProtKB-UniRule"/>
</dbReference>
<dbReference type="CDD" id="cd01025">
    <property type="entry name" value="TOPRIM_recR"/>
    <property type="match status" value="1"/>
</dbReference>
<dbReference type="Gene3D" id="3.40.1360.10">
    <property type="match status" value="1"/>
</dbReference>
<dbReference type="Gene3D" id="6.10.250.240">
    <property type="match status" value="1"/>
</dbReference>
<dbReference type="Gene3D" id="1.10.8.420">
    <property type="entry name" value="RecR Domain 1"/>
    <property type="match status" value="1"/>
</dbReference>
<dbReference type="HAMAP" id="MF_00017">
    <property type="entry name" value="RecR"/>
    <property type="match status" value="1"/>
</dbReference>
<dbReference type="InterPro" id="IPR000093">
    <property type="entry name" value="DNA_Rcmb_RecR"/>
</dbReference>
<dbReference type="InterPro" id="IPR023627">
    <property type="entry name" value="Rcmb_RecR"/>
</dbReference>
<dbReference type="InterPro" id="IPR006171">
    <property type="entry name" value="TOPRIM_dom"/>
</dbReference>
<dbReference type="InterPro" id="IPR034137">
    <property type="entry name" value="TOPRIM_RecR"/>
</dbReference>
<dbReference type="NCBIfam" id="TIGR00615">
    <property type="entry name" value="recR"/>
    <property type="match status" value="1"/>
</dbReference>
<dbReference type="PANTHER" id="PTHR30446">
    <property type="entry name" value="RECOMBINATION PROTEIN RECR"/>
    <property type="match status" value="1"/>
</dbReference>
<dbReference type="PANTHER" id="PTHR30446:SF0">
    <property type="entry name" value="RECOMBINATION PROTEIN RECR"/>
    <property type="match status" value="1"/>
</dbReference>
<dbReference type="Pfam" id="PF21175">
    <property type="entry name" value="RecR_C"/>
    <property type="match status" value="1"/>
</dbReference>
<dbReference type="Pfam" id="PF21176">
    <property type="entry name" value="RecR_HhH"/>
    <property type="match status" value="1"/>
</dbReference>
<dbReference type="Pfam" id="PF13662">
    <property type="entry name" value="Toprim_4"/>
    <property type="match status" value="1"/>
</dbReference>
<dbReference type="SMART" id="SM00493">
    <property type="entry name" value="TOPRIM"/>
    <property type="match status" value="1"/>
</dbReference>
<dbReference type="SUPFAM" id="SSF111304">
    <property type="entry name" value="Recombination protein RecR"/>
    <property type="match status" value="1"/>
</dbReference>
<dbReference type="PROSITE" id="PS50880">
    <property type="entry name" value="TOPRIM"/>
    <property type="match status" value="1"/>
</dbReference>
<keyword id="KW-0227">DNA damage</keyword>
<keyword id="KW-0233">DNA recombination</keyword>
<keyword id="KW-0234">DNA repair</keyword>
<keyword id="KW-0479">Metal-binding</keyword>
<keyword id="KW-1185">Reference proteome</keyword>
<keyword id="KW-0862">Zinc</keyword>
<keyword id="KW-0863">Zinc-finger</keyword>
<feature type="chain" id="PRO_0000190305" description="Recombination protein RecR">
    <location>
        <begin position="1"/>
        <end position="204"/>
    </location>
</feature>
<feature type="domain" description="Toprim" evidence="1">
    <location>
        <begin position="83"/>
        <end position="181"/>
    </location>
</feature>
<feature type="zinc finger region" description="C4-type" evidence="1">
    <location>
        <begin position="58"/>
        <end position="75"/>
    </location>
</feature>
<evidence type="ECO:0000255" key="1">
    <source>
        <dbReference type="HAMAP-Rule" id="MF_00017"/>
    </source>
</evidence>
<sequence>MRYSSGAVEALIEEFAKLPGIGRKTAQRLTMHVLHERRSEVEKLASALIDVKEKVIRCSVCQNITDLGVDPCHICTSAGRDRSVICVVESPTEVLAFEKTGHYKGLYHVLHGVISPLDGVGPDDIKVRELIARIGVDSTGGVREVVLALNPTVEGETTSLYISKLLKPLGINVTRIARGIPVGAELEFIDEATLSRAMEGRSAI</sequence>
<organism>
    <name type="scientific">Chlorobaculum tepidum (strain ATCC 49652 / DSM 12025 / NBRC 103806 / TLS)</name>
    <name type="common">Chlorobium tepidum</name>
    <dbReference type="NCBI Taxonomy" id="194439"/>
    <lineage>
        <taxon>Bacteria</taxon>
        <taxon>Pseudomonadati</taxon>
        <taxon>Chlorobiota</taxon>
        <taxon>Chlorobiia</taxon>
        <taxon>Chlorobiales</taxon>
        <taxon>Chlorobiaceae</taxon>
        <taxon>Chlorobaculum</taxon>
    </lineage>
</organism>
<proteinExistence type="inferred from homology"/>
<name>RECR_CHLTE</name>
<protein>
    <recommendedName>
        <fullName evidence="1">Recombination protein RecR</fullName>
    </recommendedName>
</protein>
<reference key="1">
    <citation type="journal article" date="2002" name="Proc. Natl. Acad. Sci. U.S.A.">
        <title>The complete genome sequence of Chlorobium tepidum TLS, a photosynthetic, anaerobic, green-sulfur bacterium.</title>
        <authorList>
            <person name="Eisen J.A."/>
            <person name="Nelson K.E."/>
            <person name="Paulsen I.T."/>
            <person name="Heidelberg J.F."/>
            <person name="Wu M."/>
            <person name="Dodson R.J."/>
            <person name="DeBoy R.T."/>
            <person name="Gwinn M.L."/>
            <person name="Nelson W.C."/>
            <person name="Haft D.H."/>
            <person name="Hickey E.K."/>
            <person name="Peterson J.D."/>
            <person name="Durkin A.S."/>
            <person name="Kolonay J.F."/>
            <person name="Yang F."/>
            <person name="Holt I.E."/>
            <person name="Umayam L.A."/>
            <person name="Mason T.M."/>
            <person name="Brenner M."/>
            <person name="Shea T.P."/>
            <person name="Parksey D.S."/>
            <person name="Nierman W.C."/>
            <person name="Feldblyum T.V."/>
            <person name="Hansen C.L."/>
            <person name="Craven M.B."/>
            <person name="Radune D."/>
            <person name="Vamathevan J.J."/>
            <person name="Khouri H.M."/>
            <person name="White O."/>
            <person name="Gruber T.M."/>
            <person name="Ketchum K.A."/>
            <person name="Venter J.C."/>
            <person name="Tettelin H."/>
            <person name="Bryant D.A."/>
            <person name="Fraser C.M."/>
        </authorList>
    </citation>
    <scope>NUCLEOTIDE SEQUENCE [LARGE SCALE GENOMIC DNA]</scope>
    <source>
        <strain>ATCC 49652 / DSM 12025 / NBRC 103806 / TLS</strain>
    </source>
</reference>